<reference key="1">
    <citation type="journal article" date="1995" name="Proc. Natl. Acad. Sci. U.S.A.">
        <title>OR-1, a member of the nuclear receptor superfamily that interacts with the 9-cis-retinoic acid receptor.</title>
        <authorList>
            <person name="Teboul M."/>
            <person name="Enmark E."/>
            <person name="Li Q."/>
            <person name="Wikstroem A.-C."/>
            <person name="Pelto-Huikko M."/>
            <person name="Gustafsson J.-A."/>
        </authorList>
    </citation>
    <scope>NUCLEOTIDE SEQUENCE [MRNA]</scope>
    <source>
        <strain>Sprague-Dawley</strain>
        <tissue>Liver</tissue>
    </source>
</reference>
<reference key="2">
    <citation type="journal article" date="1994" name="Proc. Natl. Acad. Sci. U.S.A.">
        <title>Ubiquitous receptor: a receptor that modulates gene activation by retinoic acid and thyroid hormone receptors.</title>
        <authorList>
            <person name="Song C."/>
            <person name="Kokontis J.M."/>
            <person name="Hiipakka R.A."/>
            <person name="Liao S."/>
        </authorList>
    </citation>
    <scope>NUCLEOTIDE SEQUENCE [MRNA]</scope>
    <source>
        <strain>Sprague-Dawley</strain>
        <tissue>Vagina</tissue>
    </source>
</reference>
<accession>Q62755</accession>
<accession>Q62694</accession>
<proteinExistence type="evidence at transcript level"/>
<name>NR1H2_RAT</name>
<dbReference type="EMBL" id="U20389">
    <property type="protein sequence ID" value="AAA69522.1"/>
    <property type="molecule type" value="mRNA"/>
</dbReference>
<dbReference type="EMBL" id="U14533">
    <property type="protein sequence ID" value="AAA52361.1"/>
    <property type="molecule type" value="mRNA"/>
</dbReference>
<dbReference type="PIR" id="I59354">
    <property type="entry name" value="I59354"/>
</dbReference>
<dbReference type="RefSeq" id="NP_001385538.1">
    <property type="nucleotide sequence ID" value="NM_001398609.1"/>
</dbReference>
<dbReference type="RefSeq" id="NP_001385539.1">
    <property type="nucleotide sequence ID" value="NM_001398610.1"/>
</dbReference>
<dbReference type="RefSeq" id="NP_113814.1">
    <property type="nucleotide sequence ID" value="NM_031626.1"/>
</dbReference>
<dbReference type="SMR" id="Q62755"/>
<dbReference type="FunCoup" id="Q62755">
    <property type="interactions" value="651"/>
</dbReference>
<dbReference type="STRING" id="10116.ENSRNOP00000026862"/>
<dbReference type="BindingDB" id="Q62755"/>
<dbReference type="ChEMBL" id="CHEMBL4105785"/>
<dbReference type="GlyGen" id="Q62755">
    <property type="glycosylation" value="1 site"/>
</dbReference>
<dbReference type="PhosphoSitePlus" id="Q62755"/>
<dbReference type="PaxDb" id="10116-ENSRNOP00000026862"/>
<dbReference type="GeneID" id="58851"/>
<dbReference type="KEGG" id="rno:58851"/>
<dbReference type="UCSC" id="RGD:61906">
    <property type="organism name" value="rat"/>
</dbReference>
<dbReference type="AGR" id="RGD:61906"/>
<dbReference type="CTD" id="7376"/>
<dbReference type="RGD" id="61906">
    <property type="gene designation" value="Nr1h2"/>
</dbReference>
<dbReference type="VEuPathDB" id="HostDB:ENSRNOG00000019812"/>
<dbReference type="eggNOG" id="KOG3575">
    <property type="taxonomic scope" value="Eukaryota"/>
</dbReference>
<dbReference type="HOGENOM" id="CLU_007368_12_4_1"/>
<dbReference type="InParanoid" id="Q62755"/>
<dbReference type="OrthoDB" id="5837785at2759"/>
<dbReference type="PhylomeDB" id="Q62755"/>
<dbReference type="TreeFam" id="TF352167"/>
<dbReference type="Reactome" id="R-RNO-383280">
    <property type="pathway name" value="Nuclear Receptor transcription pathway"/>
</dbReference>
<dbReference type="Reactome" id="R-RNO-4090294">
    <property type="pathway name" value="SUMOylation of intracellular receptors"/>
</dbReference>
<dbReference type="Reactome" id="R-RNO-8866427">
    <property type="pathway name" value="VLDLR internalisation and degradation"/>
</dbReference>
<dbReference type="Reactome" id="R-RNO-9029569">
    <property type="pathway name" value="NR1H3 &amp; NR1H2 regulate gene expression linked to cholesterol transport and efflux"/>
</dbReference>
<dbReference type="Reactome" id="R-RNO-9623433">
    <property type="pathway name" value="NR1H2 &amp; NR1H3 regulate gene expression to control bile acid homeostasis"/>
</dbReference>
<dbReference type="PRO" id="PR:Q62755"/>
<dbReference type="Proteomes" id="UP000002494">
    <property type="component" value="Chromosome 1"/>
</dbReference>
<dbReference type="Bgee" id="ENSRNOG00000019812">
    <property type="expression patterns" value="Expressed in thymus and 20 other cell types or tissues"/>
</dbReference>
<dbReference type="GO" id="GO:0005737">
    <property type="term" value="C:cytoplasm"/>
    <property type="evidence" value="ECO:0000266"/>
    <property type="project" value="RGD"/>
</dbReference>
<dbReference type="GO" id="GO:0005634">
    <property type="term" value="C:nucleus"/>
    <property type="evidence" value="ECO:0000266"/>
    <property type="project" value="RGD"/>
</dbReference>
<dbReference type="GO" id="GO:0090575">
    <property type="term" value="C:RNA polymerase II transcription regulator complex"/>
    <property type="evidence" value="ECO:0000266"/>
    <property type="project" value="RGD"/>
</dbReference>
<dbReference type="GO" id="GO:0034191">
    <property type="term" value="F:apolipoprotein A-I receptor binding"/>
    <property type="evidence" value="ECO:0000266"/>
    <property type="project" value="RGD"/>
</dbReference>
<dbReference type="GO" id="GO:0051117">
    <property type="term" value="F:ATPase binding"/>
    <property type="evidence" value="ECO:0000266"/>
    <property type="project" value="RGD"/>
</dbReference>
<dbReference type="GO" id="GO:0031490">
    <property type="term" value="F:chromatin DNA binding"/>
    <property type="evidence" value="ECO:0000266"/>
    <property type="project" value="RGD"/>
</dbReference>
<dbReference type="GO" id="GO:0003677">
    <property type="term" value="F:DNA binding"/>
    <property type="evidence" value="ECO:0000266"/>
    <property type="project" value="RGD"/>
</dbReference>
<dbReference type="GO" id="GO:0001228">
    <property type="term" value="F:DNA-binding transcription activator activity, RNA polymerase II-specific"/>
    <property type="evidence" value="ECO:0000314"/>
    <property type="project" value="NTNU_SB"/>
</dbReference>
<dbReference type="GO" id="GO:0003700">
    <property type="term" value="F:DNA-binding transcription factor activity"/>
    <property type="evidence" value="ECO:0000266"/>
    <property type="project" value="RGD"/>
</dbReference>
<dbReference type="GO" id="GO:0000981">
    <property type="term" value="F:DNA-binding transcription factor activity, RNA polymerase II-specific"/>
    <property type="evidence" value="ECO:0000314"/>
    <property type="project" value="RGD"/>
</dbReference>
<dbReference type="GO" id="GO:0004879">
    <property type="term" value="F:nuclear receptor activity"/>
    <property type="evidence" value="ECO:0000266"/>
    <property type="project" value="RGD"/>
</dbReference>
<dbReference type="GO" id="GO:0046965">
    <property type="term" value="F:nuclear retinoid X receptor binding"/>
    <property type="evidence" value="ECO:0000314"/>
    <property type="project" value="RGD"/>
</dbReference>
<dbReference type="GO" id="GO:0000978">
    <property type="term" value="F:RNA polymerase II cis-regulatory region sequence-specific DNA binding"/>
    <property type="evidence" value="ECO:0000315"/>
    <property type="project" value="NTNU_SB"/>
</dbReference>
<dbReference type="GO" id="GO:0008270">
    <property type="term" value="F:zinc ion binding"/>
    <property type="evidence" value="ECO:0007669"/>
    <property type="project" value="UniProtKB-KW"/>
</dbReference>
<dbReference type="GO" id="GO:0030154">
    <property type="term" value="P:cell differentiation"/>
    <property type="evidence" value="ECO:0000318"/>
    <property type="project" value="GO_Central"/>
</dbReference>
<dbReference type="GO" id="GO:0042632">
    <property type="term" value="P:cholesterol homeostasis"/>
    <property type="evidence" value="ECO:0000250"/>
    <property type="project" value="UniProtKB"/>
</dbReference>
<dbReference type="GO" id="GO:0030522">
    <property type="term" value="P:intracellular receptor signaling pathway"/>
    <property type="evidence" value="ECO:0000318"/>
    <property type="project" value="GO_Central"/>
</dbReference>
<dbReference type="GO" id="GO:0055088">
    <property type="term" value="P:lipid homeostasis"/>
    <property type="evidence" value="ECO:0000266"/>
    <property type="project" value="RGD"/>
</dbReference>
<dbReference type="GO" id="GO:0006629">
    <property type="term" value="P:lipid metabolic process"/>
    <property type="evidence" value="ECO:0000266"/>
    <property type="project" value="RGD"/>
</dbReference>
<dbReference type="GO" id="GO:0010887">
    <property type="term" value="P:negative regulation of cholesterol storage"/>
    <property type="evidence" value="ECO:0000266"/>
    <property type="project" value="RGD"/>
</dbReference>
<dbReference type="GO" id="GO:0120163">
    <property type="term" value="P:negative regulation of cold-induced thermogenesis"/>
    <property type="evidence" value="ECO:0000250"/>
    <property type="project" value="YuBioLab"/>
</dbReference>
<dbReference type="GO" id="GO:0045892">
    <property type="term" value="P:negative regulation of DNA-templated transcription"/>
    <property type="evidence" value="ECO:0000266"/>
    <property type="project" value="RGD"/>
</dbReference>
<dbReference type="GO" id="GO:0010629">
    <property type="term" value="P:negative regulation of gene expression"/>
    <property type="evidence" value="ECO:0000314"/>
    <property type="project" value="RGD"/>
</dbReference>
<dbReference type="GO" id="GO:0050728">
    <property type="term" value="P:negative regulation of inflammatory response"/>
    <property type="evidence" value="ECO:0000318"/>
    <property type="project" value="GO_Central"/>
</dbReference>
<dbReference type="GO" id="GO:0032369">
    <property type="term" value="P:negative regulation of lipid transport"/>
    <property type="evidence" value="ECO:0000266"/>
    <property type="project" value="RGD"/>
</dbReference>
<dbReference type="GO" id="GO:0048550">
    <property type="term" value="P:negative regulation of pinocytosis"/>
    <property type="evidence" value="ECO:0000266"/>
    <property type="project" value="RGD"/>
</dbReference>
<dbReference type="GO" id="GO:0045861">
    <property type="term" value="P:negative regulation of proteolysis"/>
    <property type="evidence" value="ECO:0000266"/>
    <property type="project" value="RGD"/>
</dbReference>
<dbReference type="GO" id="GO:1903573">
    <property type="term" value="P:negative regulation of response to endoplasmic reticulum stress"/>
    <property type="evidence" value="ECO:0000250"/>
    <property type="project" value="UniProtKB"/>
</dbReference>
<dbReference type="GO" id="GO:0000122">
    <property type="term" value="P:negative regulation of transcription by RNA polymerase II"/>
    <property type="evidence" value="ECO:0000266"/>
    <property type="project" value="RGD"/>
</dbReference>
<dbReference type="GO" id="GO:0036151">
    <property type="term" value="P:phosphatidylcholine acyl-chain remodeling"/>
    <property type="evidence" value="ECO:0000250"/>
    <property type="project" value="UniProtKB"/>
</dbReference>
<dbReference type="GO" id="GO:0010875">
    <property type="term" value="P:positive regulation of cholesterol efflux"/>
    <property type="evidence" value="ECO:0000266"/>
    <property type="project" value="RGD"/>
</dbReference>
<dbReference type="GO" id="GO:0032376">
    <property type="term" value="P:positive regulation of cholesterol transport"/>
    <property type="evidence" value="ECO:0000266"/>
    <property type="project" value="RGD"/>
</dbReference>
<dbReference type="GO" id="GO:0045893">
    <property type="term" value="P:positive regulation of DNA-templated transcription"/>
    <property type="evidence" value="ECO:0000266"/>
    <property type="project" value="RGD"/>
</dbReference>
<dbReference type="GO" id="GO:0045723">
    <property type="term" value="P:positive regulation of fatty acid biosynthetic process"/>
    <property type="evidence" value="ECO:0000266"/>
    <property type="project" value="RGD"/>
</dbReference>
<dbReference type="GO" id="GO:0010628">
    <property type="term" value="P:positive regulation of gene expression"/>
    <property type="evidence" value="ECO:0000314"/>
    <property type="project" value="RGD"/>
</dbReference>
<dbReference type="GO" id="GO:0090108">
    <property type="term" value="P:positive regulation of high-density lipoprotein particle assembly"/>
    <property type="evidence" value="ECO:0000266"/>
    <property type="project" value="RGD"/>
</dbReference>
<dbReference type="GO" id="GO:0010884">
    <property type="term" value="P:positive regulation of lipid storage"/>
    <property type="evidence" value="ECO:0000266"/>
    <property type="project" value="RGD"/>
</dbReference>
<dbReference type="GO" id="GO:1902895">
    <property type="term" value="P:positive regulation of miRNA transcription"/>
    <property type="evidence" value="ECO:0000266"/>
    <property type="project" value="RGD"/>
</dbReference>
<dbReference type="GO" id="GO:0090187">
    <property type="term" value="P:positive regulation of pancreatic juice secretion"/>
    <property type="evidence" value="ECO:0000266"/>
    <property type="project" value="RGD"/>
</dbReference>
<dbReference type="GO" id="GO:0051247">
    <property type="term" value="P:positive regulation of protein metabolic process"/>
    <property type="evidence" value="ECO:0000266"/>
    <property type="project" value="RGD"/>
</dbReference>
<dbReference type="GO" id="GO:0090340">
    <property type="term" value="P:positive regulation of secretion of lysosomal enzymes"/>
    <property type="evidence" value="ECO:0000266"/>
    <property type="project" value="RGD"/>
</dbReference>
<dbReference type="GO" id="GO:0045944">
    <property type="term" value="P:positive regulation of transcription by RNA polymerase II"/>
    <property type="evidence" value="ECO:0000314"/>
    <property type="project" value="NTNU_SB"/>
</dbReference>
<dbReference type="GO" id="GO:0010867">
    <property type="term" value="P:positive regulation of triglyceride biosynthetic process"/>
    <property type="evidence" value="ECO:0000266"/>
    <property type="project" value="RGD"/>
</dbReference>
<dbReference type="GO" id="GO:0006355">
    <property type="term" value="P:regulation of DNA-templated transcription"/>
    <property type="evidence" value="ECO:0000266"/>
    <property type="project" value="RGD"/>
</dbReference>
<dbReference type="GO" id="GO:0010883">
    <property type="term" value="P:regulation of lipid storage"/>
    <property type="evidence" value="ECO:0000318"/>
    <property type="project" value="GO_Central"/>
</dbReference>
<dbReference type="GO" id="GO:0006357">
    <property type="term" value="P:regulation of transcription by RNA polymerase II"/>
    <property type="evidence" value="ECO:0000266"/>
    <property type="project" value="RGD"/>
</dbReference>
<dbReference type="GO" id="GO:0031667">
    <property type="term" value="P:response to nutrient levels"/>
    <property type="evidence" value="ECO:0000270"/>
    <property type="project" value="RGD"/>
</dbReference>
<dbReference type="GO" id="GO:0048384">
    <property type="term" value="P:retinoic acid receptor signaling pathway"/>
    <property type="evidence" value="ECO:0000314"/>
    <property type="project" value="RGD"/>
</dbReference>
<dbReference type="CDD" id="cd06954">
    <property type="entry name" value="NR_LBD_LXR"/>
    <property type="match status" value="1"/>
</dbReference>
<dbReference type="FunFam" id="1.10.565.10:FF:000014">
    <property type="entry name" value="Oxysterols receptor LXR-alpha isoform 1"/>
    <property type="match status" value="1"/>
</dbReference>
<dbReference type="FunFam" id="3.30.50.10:FF:000017">
    <property type="entry name" value="Oxysterols receptor LXR-alpha isoform 1"/>
    <property type="match status" value="1"/>
</dbReference>
<dbReference type="Gene3D" id="3.30.50.10">
    <property type="entry name" value="Erythroid Transcription Factor GATA-1, subunit A"/>
    <property type="match status" value="1"/>
</dbReference>
<dbReference type="Gene3D" id="1.10.565.10">
    <property type="entry name" value="Retinoid X Receptor"/>
    <property type="match status" value="1"/>
</dbReference>
<dbReference type="InterPro" id="IPR023257">
    <property type="entry name" value="Liver_X_rcpt"/>
</dbReference>
<dbReference type="InterPro" id="IPR035500">
    <property type="entry name" value="NHR-like_dom_sf"/>
</dbReference>
<dbReference type="InterPro" id="IPR000536">
    <property type="entry name" value="Nucl_hrmn_rcpt_lig-bd"/>
</dbReference>
<dbReference type="InterPro" id="IPR050234">
    <property type="entry name" value="Nuclear_hormone_rcpt_NR1"/>
</dbReference>
<dbReference type="InterPro" id="IPR001723">
    <property type="entry name" value="Nuclear_hrmn_rcpt"/>
</dbReference>
<dbReference type="InterPro" id="IPR001628">
    <property type="entry name" value="Znf_hrmn_rcpt"/>
</dbReference>
<dbReference type="InterPro" id="IPR013088">
    <property type="entry name" value="Znf_NHR/GATA"/>
</dbReference>
<dbReference type="PANTHER" id="PTHR24082">
    <property type="entry name" value="NUCLEAR HORMONE RECEPTOR"/>
    <property type="match status" value="1"/>
</dbReference>
<dbReference type="PANTHER" id="PTHR24082:SF316">
    <property type="entry name" value="OXYSTEROLS RECEPTOR LXR-BETA"/>
    <property type="match status" value="1"/>
</dbReference>
<dbReference type="Pfam" id="PF00104">
    <property type="entry name" value="Hormone_recep"/>
    <property type="match status" value="1"/>
</dbReference>
<dbReference type="Pfam" id="PF00105">
    <property type="entry name" value="zf-C4"/>
    <property type="match status" value="1"/>
</dbReference>
<dbReference type="PRINTS" id="PR02034">
    <property type="entry name" value="LIVERXRECPTR"/>
</dbReference>
<dbReference type="PRINTS" id="PR00398">
    <property type="entry name" value="STRDHORMONER"/>
</dbReference>
<dbReference type="PRINTS" id="PR00047">
    <property type="entry name" value="STROIDFINGER"/>
</dbReference>
<dbReference type="SMART" id="SM00430">
    <property type="entry name" value="HOLI"/>
    <property type="match status" value="1"/>
</dbReference>
<dbReference type="SMART" id="SM00399">
    <property type="entry name" value="ZnF_C4"/>
    <property type="match status" value="1"/>
</dbReference>
<dbReference type="SUPFAM" id="SSF57716">
    <property type="entry name" value="Glucocorticoid receptor-like (DNA-binding domain)"/>
    <property type="match status" value="1"/>
</dbReference>
<dbReference type="SUPFAM" id="SSF48508">
    <property type="entry name" value="Nuclear receptor ligand-binding domain"/>
    <property type="match status" value="1"/>
</dbReference>
<dbReference type="PROSITE" id="PS51843">
    <property type="entry name" value="NR_LBD"/>
    <property type="match status" value="1"/>
</dbReference>
<dbReference type="PROSITE" id="PS00031">
    <property type="entry name" value="NUCLEAR_REC_DBD_1"/>
    <property type="match status" value="1"/>
</dbReference>
<dbReference type="PROSITE" id="PS51030">
    <property type="entry name" value="NUCLEAR_REC_DBD_2"/>
    <property type="match status" value="1"/>
</dbReference>
<evidence type="ECO:0000250" key="1">
    <source>
        <dbReference type="UniProtKB" id="P55055"/>
    </source>
</evidence>
<evidence type="ECO:0000250" key="2">
    <source>
        <dbReference type="UniProtKB" id="Q60644"/>
    </source>
</evidence>
<evidence type="ECO:0000255" key="3">
    <source>
        <dbReference type="PROSITE-ProRule" id="PRU00407"/>
    </source>
</evidence>
<evidence type="ECO:0000255" key="4">
    <source>
        <dbReference type="PROSITE-ProRule" id="PRU01189"/>
    </source>
</evidence>
<evidence type="ECO:0000256" key="5">
    <source>
        <dbReference type="SAM" id="MobiDB-lite"/>
    </source>
</evidence>
<evidence type="ECO:0000305" key="6"/>
<gene>
    <name type="primary">Nr1h2</name>
    <name type="synonym">Lxrb</name>
</gene>
<keyword id="KW-0010">Activator</keyword>
<keyword id="KW-0238">DNA-binding</keyword>
<keyword id="KW-1017">Isopeptide bond</keyword>
<keyword id="KW-0479">Metal-binding</keyword>
<keyword id="KW-0539">Nucleus</keyword>
<keyword id="KW-0675">Receptor</keyword>
<keyword id="KW-1185">Reference proteome</keyword>
<keyword id="KW-0804">Transcription</keyword>
<keyword id="KW-0805">Transcription regulation</keyword>
<keyword id="KW-0832">Ubl conjugation</keyword>
<keyword id="KW-0862">Zinc</keyword>
<keyword id="KW-0863">Zinc-finger</keyword>
<sequence length="446" mass="49736">MSSPTSSLDTPLPGNGSPQPSTSSTSPTIKEEGQETDPPPGSEGSSSAYIVVILEPEDEPERKRKKGPAPKMLGHELCRVCGDKASGFHYNVLSCEGCKGFFRRSVVHGGAGRYACRGSGTCQMDAFMRRKCQLCRLRKCKEAGMREQCVLSEEQIRKKKIQKQQQQQPPPPTEPASGSSARPAASPGTSEASSQGSGEGEGIQLTAAQELMIQQLVAAQLQCNKRSFSDQPKVTPWPLGADPQSRDARQQRFAHFTELAIISVQEIVDFAKQVPGFLQLGREDQIALLKASTIEIMLLETARRYNHETECITFLKDFTYSKDDFHRAGLQVEFINPIFEFSRAMRRLGLDDAEYALLIAINIFSADRPNVQEPSRVEALQQPYVEALLSYTRIKRPQDQLRFPRMLMKLVSLRTLSSVHSEQVFALRLQDKKLPPLLSEIWDVHE</sequence>
<comment type="function">
    <text evidence="1 2">Nuclear receptor that exhibits a ligand-dependent transcriptional activation activity (By similarity). Binds preferentially to double-stranded oligonucleotide direct repeats having the consensus half-site sequence 5'-AGGTCA-3' and 4-nt spacing (DR-4). Regulates cholesterol uptake through MYLIP-dependent ubiquitination of LDLR, VLDLR and LRP8; DLDLR and LRP8. Interplays functionally with RORA for the regulation of genes involved in liver metabolism (By similarity). Induces LPCAT3-dependent phospholipid remodeling in endoplasmic reticulum (ER) membranes of hepatocytes, driving SREBF1 processing and lipogenesis (By similarity). Via LPCAT3, triggers the incorporation of arachidonate into phosphatidylcholines of ER membranes, increasing membrane dynamics and enabling triacylglycerols transfer to nascent very low-density lipoprotein (VLDL) particles. Via LPCAT3 also counteracts lipid-induced ER stress response and inflammation, likely by modulating SRC kinase membrane compartmentalization and limiting the synthesis of lipid inflammatory mediators (By similarity). Plays an anti-inflammatory role during the hepatic acute phase response by acting as a corepressor: inhibits the hepatic acute phase response by preventing dissociation of the N-Cor corepressor complex (By similarity).</text>
</comment>
<comment type="subunit">
    <text evidence="1">Forms a heterodimer with RXR. Interacts with CCAR2 (via N-terminus) in a ligand-independent manner. Interacts (when sumoylated) with GPS2; interaction with GPS2 onto hepatic acute phase protein promoters prevents N-Cor corepressor complex dissociation (By similarity). Interacts with ABCA12 and ABCA1; this interaction is required for ABCA1 localization to the cell surface and is necessary for its normal activity and stability (By similarity).</text>
</comment>
<comment type="subcellular location">
    <subcellularLocation>
        <location evidence="3">Nucleus</location>
    </subcellularLocation>
</comment>
<comment type="PTM">
    <text evidence="1">Sumoylated by SUMO2 at Lys-395 and Lys-433 during the hepatic acute phase response, leading to promote interaction with GPS2 and prevent N-Cor corepressor complex dissociation.</text>
</comment>
<comment type="similarity">
    <text evidence="6">Belongs to the nuclear hormone receptor family. NR1 subfamily.</text>
</comment>
<feature type="chain" id="PRO_0000053534" description="Oxysterols receptor LXR-beta">
    <location>
        <begin position="1"/>
        <end position="446"/>
    </location>
</feature>
<feature type="domain" description="NR LBD" evidence="4">
    <location>
        <begin position="208"/>
        <end position="446"/>
    </location>
</feature>
<feature type="DNA-binding region" description="Nuclear receptor" evidence="3">
    <location>
        <begin position="75"/>
        <end position="152"/>
    </location>
</feature>
<feature type="zinc finger region" description="NR C4-type" evidence="3">
    <location>
        <begin position="78"/>
        <end position="98"/>
    </location>
</feature>
<feature type="zinc finger region" description="NR C4-type" evidence="3">
    <location>
        <begin position="116"/>
        <end position="140"/>
    </location>
</feature>
<feature type="region of interest" description="Transactivation AF-1; required for ligand-independent transactivation function" evidence="1">
    <location>
        <begin position="1"/>
        <end position="76"/>
    </location>
</feature>
<feature type="region of interest" description="Disordered" evidence="5">
    <location>
        <begin position="1"/>
        <end position="69"/>
    </location>
</feature>
<feature type="region of interest" description="Disordered" evidence="5">
    <location>
        <begin position="160"/>
        <end position="201"/>
    </location>
</feature>
<feature type="region of interest" description="Transactivation AF-2; required for ligand-dependent transactivation function; mediates interaction with CCAR2" evidence="1">
    <location>
        <begin position="205"/>
        <end position="446"/>
    </location>
</feature>
<feature type="compositionally biased region" description="Low complexity" evidence="5">
    <location>
        <begin position="1"/>
        <end position="28"/>
    </location>
</feature>
<feature type="compositionally biased region" description="Low complexity" evidence="5">
    <location>
        <begin position="175"/>
        <end position="196"/>
    </location>
</feature>
<feature type="cross-link" description="Glycyl lysine isopeptide (Lys-Gly) (interchain with G-Cter in SUMO2)" evidence="1">
    <location>
        <position position="395"/>
    </location>
</feature>
<feature type="cross-link" description="Glycyl lysine isopeptide (Lys-Gly) (interchain with G-Cter in SUMO2)" evidence="1">
    <location>
        <position position="433"/>
    </location>
</feature>
<feature type="sequence conflict" description="In Ref. 2; AAA52361." evidence="6" ref="2">
    <original>G</original>
    <variation>V</variation>
    <location>
        <position position="33"/>
    </location>
</feature>
<feature type="sequence conflict" description="In Ref. 2; AAA52361." evidence="6" ref="2">
    <location>
        <begin position="52"/>
        <end position="54"/>
    </location>
</feature>
<feature type="sequence conflict" description="In Ref. 2; AAA52361." evidence="6" ref="2">
    <original>A</original>
    <variation>V</variation>
    <location>
        <position position="219"/>
    </location>
</feature>
<organism>
    <name type="scientific">Rattus norvegicus</name>
    <name type="common">Rat</name>
    <dbReference type="NCBI Taxonomy" id="10116"/>
    <lineage>
        <taxon>Eukaryota</taxon>
        <taxon>Metazoa</taxon>
        <taxon>Chordata</taxon>
        <taxon>Craniata</taxon>
        <taxon>Vertebrata</taxon>
        <taxon>Euteleostomi</taxon>
        <taxon>Mammalia</taxon>
        <taxon>Eutheria</taxon>
        <taxon>Euarchontoglires</taxon>
        <taxon>Glires</taxon>
        <taxon>Rodentia</taxon>
        <taxon>Myomorpha</taxon>
        <taxon>Muroidea</taxon>
        <taxon>Muridae</taxon>
        <taxon>Murinae</taxon>
        <taxon>Rattus</taxon>
    </lineage>
</organism>
<protein>
    <recommendedName>
        <fullName>Oxysterols receptor LXR-beta</fullName>
    </recommendedName>
    <alternativeName>
        <fullName>Liver X receptor beta</fullName>
    </alternativeName>
    <alternativeName>
        <fullName>Nuclear receptor subfamily 1 group H member 2</fullName>
    </alternativeName>
    <alternativeName>
        <fullName>Orphan nuclear receptor OR-1</fullName>
    </alternativeName>
    <alternativeName>
        <fullName>Ubiquitously-expressed nuclear receptor</fullName>
        <shortName>UR</shortName>
    </alternativeName>
</protein>